<gene>
    <name evidence="1" type="primary">acpS</name>
    <name type="ordered locus">SAB1956c</name>
</gene>
<proteinExistence type="inferred from homology"/>
<protein>
    <recommendedName>
        <fullName evidence="1">Holo-[acyl-carrier-protein] synthase</fullName>
        <shortName evidence="1">Holo-ACP synthase</shortName>
        <ecNumber evidence="1">2.7.8.7</ecNumber>
    </recommendedName>
    <alternativeName>
        <fullName evidence="1">4'-phosphopantetheinyl transferase AcpS</fullName>
    </alternativeName>
</protein>
<comment type="function">
    <text evidence="1">Transfers the 4'-phosphopantetheine moiety from coenzyme A to a Ser of acyl-carrier-protein.</text>
</comment>
<comment type="catalytic activity">
    <reaction evidence="1">
        <text>apo-[ACP] + CoA = holo-[ACP] + adenosine 3',5'-bisphosphate + H(+)</text>
        <dbReference type="Rhea" id="RHEA:12068"/>
        <dbReference type="Rhea" id="RHEA-COMP:9685"/>
        <dbReference type="Rhea" id="RHEA-COMP:9690"/>
        <dbReference type="ChEBI" id="CHEBI:15378"/>
        <dbReference type="ChEBI" id="CHEBI:29999"/>
        <dbReference type="ChEBI" id="CHEBI:57287"/>
        <dbReference type="ChEBI" id="CHEBI:58343"/>
        <dbReference type="ChEBI" id="CHEBI:64479"/>
        <dbReference type="EC" id="2.7.8.7"/>
    </reaction>
</comment>
<comment type="cofactor">
    <cofactor evidence="1">
        <name>Mg(2+)</name>
        <dbReference type="ChEBI" id="CHEBI:18420"/>
    </cofactor>
</comment>
<comment type="subcellular location">
    <subcellularLocation>
        <location evidence="1">Cytoplasm</location>
    </subcellularLocation>
</comment>
<comment type="similarity">
    <text evidence="1">Belongs to the P-Pant transferase superfamily. AcpS family.</text>
</comment>
<dbReference type="EC" id="2.7.8.7" evidence="1"/>
<dbReference type="EMBL" id="AJ938182">
    <property type="protein sequence ID" value="CAI81645.1"/>
    <property type="molecule type" value="Genomic_DNA"/>
</dbReference>
<dbReference type="RefSeq" id="WP_000581197.1">
    <property type="nucleotide sequence ID" value="NC_007622.1"/>
</dbReference>
<dbReference type="SMR" id="Q2YUI2"/>
<dbReference type="KEGG" id="sab:SAB1956c"/>
<dbReference type="HOGENOM" id="CLU_089696_1_2_9"/>
<dbReference type="GO" id="GO:0005737">
    <property type="term" value="C:cytoplasm"/>
    <property type="evidence" value="ECO:0007669"/>
    <property type="project" value="UniProtKB-SubCell"/>
</dbReference>
<dbReference type="GO" id="GO:0008897">
    <property type="term" value="F:holo-[acyl-carrier-protein] synthase activity"/>
    <property type="evidence" value="ECO:0007669"/>
    <property type="project" value="UniProtKB-UniRule"/>
</dbReference>
<dbReference type="GO" id="GO:0000287">
    <property type="term" value="F:magnesium ion binding"/>
    <property type="evidence" value="ECO:0007669"/>
    <property type="project" value="UniProtKB-UniRule"/>
</dbReference>
<dbReference type="GO" id="GO:0006633">
    <property type="term" value="P:fatty acid biosynthetic process"/>
    <property type="evidence" value="ECO:0007669"/>
    <property type="project" value="UniProtKB-UniRule"/>
</dbReference>
<dbReference type="Gene3D" id="3.90.470.20">
    <property type="entry name" value="4'-phosphopantetheinyl transferase domain"/>
    <property type="match status" value="1"/>
</dbReference>
<dbReference type="HAMAP" id="MF_00101">
    <property type="entry name" value="AcpS"/>
    <property type="match status" value="1"/>
</dbReference>
<dbReference type="InterPro" id="IPR008278">
    <property type="entry name" value="4-PPantetheinyl_Trfase_dom"/>
</dbReference>
<dbReference type="InterPro" id="IPR037143">
    <property type="entry name" value="4-PPantetheinyl_Trfase_dom_sf"/>
</dbReference>
<dbReference type="InterPro" id="IPR002582">
    <property type="entry name" value="ACPS"/>
</dbReference>
<dbReference type="InterPro" id="IPR004568">
    <property type="entry name" value="Ppantetheine-prot_Trfase_dom"/>
</dbReference>
<dbReference type="NCBIfam" id="TIGR00516">
    <property type="entry name" value="acpS"/>
    <property type="match status" value="1"/>
</dbReference>
<dbReference type="NCBIfam" id="TIGR00556">
    <property type="entry name" value="pantethn_trn"/>
    <property type="match status" value="1"/>
</dbReference>
<dbReference type="Pfam" id="PF01648">
    <property type="entry name" value="ACPS"/>
    <property type="match status" value="1"/>
</dbReference>
<dbReference type="SUPFAM" id="SSF56214">
    <property type="entry name" value="4'-phosphopantetheinyl transferase"/>
    <property type="match status" value="1"/>
</dbReference>
<feature type="chain" id="PRO_0000228307" description="Holo-[acyl-carrier-protein] synthase">
    <location>
        <begin position="1"/>
        <end position="119"/>
    </location>
</feature>
<feature type="binding site" evidence="1">
    <location>
        <position position="8"/>
    </location>
    <ligand>
        <name>Mg(2+)</name>
        <dbReference type="ChEBI" id="CHEBI:18420"/>
    </ligand>
</feature>
<feature type="binding site" evidence="1">
    <location>
        <position position="59"/>
    </location>
    <ligand>
        <name>Mg(2+)</name>
        <dbReference type="ChEBI" id="CHEBI:18420"/>
    </ligand>
</feature>
<reference key="1">
    <citation type="journal article" date="2007" name="PLoS ONE">
        <title>Molecular correlates of host specialization in Staphylococcus aureus.</title>
        <authorList>
            <person name="Herron-Olson L."/>
            <person name="Fitzgerald J.R."/>
            <person name="Musser J.M."/>
            <person name="Kapur V."/>
        </authorList>
    </citation>
    <scope>NUCLEOTIDE SEQUENCE [LARGE SCALE GENOMIC DNA]</scope>
    <source>
        <strain>bovine RF122 / ET3-1</strain>
    </source>
</reference>
<name>ACPS_STAAB</name>
<evidence type="ECO:0000255" key="1">
    <source>
        <dbReference type="HAMAP-Rule" id="MF_00101"/>
    </source>
</evidence>
<keyword id="KW-0963">Cytoplasm</keyword>
<keyword id="KW-0275">Fatty acid biosynthesis</keyword>
<keyword id="KW-0276">Fatty acid metabolism</keyword>
<keyword id="KW-0444">Lipid biosynthesis</keyword>
<keyword id="KW-0443">Lipid metabolism</keyword>
<keyword id="KW-0460">Magnesium</keyword>
<keyword id="KW-0479">Metal-binding</keyword>
<keyword id="KW-0808">Transferase</keyword>
<sequence length="119" mass="13634">MIHGIGVDLIEIDRIKVLYSKQPKLVERILTKNEQHKFNNFTHEQRKIEFLAGRFATKEAFSKALGTGLGKHVAFNDIDCYNDELGKPKIDYEGFIVHVSISHTEHYAMSQVVLEKSAF</sequence>
<accession>Q2YUI2</accession>
<organism>
    <name type="scientific">Staphylococcus aureus (strain bovine RF122 / ET3-1)</name>
    <dbReference type="NCBI Taxonomy" id="273036"/>
    <lineage>
        <taxon>Bacteria</taxon>
        <taxon>Bacillati</taxon>
        <taxon>Bacillota</taxon>
        <taxon>Bacilli</taxon>
        <taxon>Bacillales</taxon>
        <taxon>Staphylococcaceae</taxon>
        <taxon>Staphylococcus</taxon>
    </lineage>
</organism>